<accession>Q8BK75</accession>
<accession>Q9D0M9</accession>
<protein>
    <recommendedName>
        <fullName>Elongator complex protein 6</fullName>
    </recommendedName>
    <alternativeName>
        <fullName>Protein TMEM103</fullName>
    </alternativeName>
</protein>
<comment type="function">
    <text evidence="1 2">Component of the elongator complex which is required for multiple tRNA modifications, including mcm5U (5-methoxycarbonylmethyl uridine), mcm5s2U (5-methoxycarbonylmethyl-2-thiouridine), and ncm5U (5-carbamoylmethyl uridine) (By similarity). The elongator complex catalyzes formation of carboxymethyluridine in the wobble base at position 34 in tRNAs (By similarity). Involved in cell migration (PubMed:22854966).</text>
</comment>
<comment type="pathway">
    <text evidence="1">tRNA modification; 5-methoxycarbonylmethyl-2-thiouridine-tRNA biosynthesis.</text>
</comment>
<comment type="subunit">
    <text evidence="1">Component of the elongator complex which consists of ELP1, ELP2, ELP3, ELP4, ELP5 and ELP6.</text>
</comment>
<comment type="subcellular location">
    <subcellularLocation>
        <location evidence="1">Cytoplasm</location>
    </subcellularLocation>
    <subcellularLocation>
        <location evidence="1">Nucleus</location>
    </subcellularLocation>
    <text evidence="1">Concentrates in the nucleus upon insulin stimulation.</text>
</comment>
<comment type="alternative products">
    <event type="alternative splicing"/>
    <isoform>
        <id>Q8BK75-1</id>
        <name>1</name>
        <sequence type="displayed"/>
    </isoform>
    <isoform>
        <id>Q8BK75-2</id>
        <name>2</name>
        <sequence type="described" ref="VSP_022723"/>
    </isoform>
</comment>
<comment type="tissue specificity">
    <text evidence="3">Expressed throughout the cerebellum.</text>
</comment>
<comment type="disruption phenotype">
    <text evidence="3">Early embryonic lethality.</text>
</comment>
<comment type="similarity">
    <text evidence="5">Belongs to the ELP6 family.</text>
</comment>
<comment type="caution">
    <text evidence="1">The elongator complex was originally thought to play a role in transcription elongation. However, it is no longer thought to play a direct role in this process and its primary function is thought to be in tRNA modification.</text>
</comment>
<sequence length="266" mass="29327">MFPELNNLLSTTPDKTEQGTLTLLCDAKTDGSFLVHHFLSFYLKANCKVCFVALVQSFSHYNIVGQKLGVSLTAARDRGQLVFLEGLKSSVEVLFHSQDEPHPLQFLREAGTGNLQSLYTFIQDTLKPADSEESPWKYPVLLVDNLSVLLSLGVGAVAVLDFMQYCRATVCCELKGNVVALVHDTEGATDEGNDTLLNGLSHQSHLILRAEGLATGFCKDVHGQLSILWRRPSRSTAQRAQSLTYQYKIQDKNVSFFAKGMSPAVL</sequence>
<name>ELP6_MOUSE</name>
<gene>
    <name type="primary">Elp6</name>
    <name type="synonym">Tmem103</name>
</gene>
<organism>
    <name type="scientific">Mus musculus</name>
    <name type="common">Mouse</name>
    <dbReference type="NCBI Taxonomy" id="10090"/>
    <lineage>
        <taxon>Eukaryota</taxon>
        <taxon>Metazoa</taxon>
        <taxon>Chordata</taxon>
        <taxon>Craniata</taxon>
        <taxon>Vertebrata</taxon>
        <taxon>Euteleostomi</taxon>
        <taxon>Mammalia</taxon>
        <taxon>Eutheria</taxon>
        <taxon>Euarchontoglires</taxon>
        <taxon>Glires</taxon>
        <taxon>Rodentia</taxon>
        <taxon>Myomorpha</taxon>
        <taxon>Muroidea</taxon>
        <taxon>Muridae</taxon>
        <taxon>Murinae</taxon>
        <taxon>Mus</taxon>
        <taxon>Mus</taxon>
    </lineage>
</organism>
<feature type="chain" id="PRO_0000274361" description="Elongator complex protein 6">
    <location>
        <begin position="1"/>
        <end position="266"/>
    </location>
</feature>
<feature type="splice variant" id="VSP_022723" description="In isoform 2." evidence="4">
    <original>MFPELNNLLSTTPDKTEQ</original>
    <variation>MAGEVTQALGGA</variation>
    <location>
        <begin position="1"/>
        <end position="18"/>
    </location>
</feature>
<feature type="mutagenesis site" description="In wobbly mutant; destabilization of the elongator complex and reduced tRNA wobble base modification leading to protein misfolding and aggregation in Purkinje neurons (PN), PN degeneration, microgliosis triggered by the NLPR3 inflammasome and an ataxia-like phenotype." evidence="3">
    <original>L</original>
    <variation>Q</variation>
    <location>
        <position position="126"/>
    </location>
</feature>
<reference key="1">
    <citation type="journal article" date="2005" name="Science">
        <title>The transcriptional landscape of the mammalian genome.</title>
        <authorList>
            <person name="Carninci P."/>
            <person name="Kasukawa T."/>
            <person name="Katayama S."/>
            <person name="Gough J."/>
            <person name="Frith M.C."/>
            <person name="Maeda N."/>
            <person name="Oyama R."/>
            <person name="Ravasi T."/>
            <person name="Lenhard B."/>
            <person name="Wells C."/>
            <person name="Kodzius R."/>
            <person name="Shimokawa K."/>
            <person name="Bajic V.B."/>
            <person name="Brenner S.E."/>
            <person name="Batalov S."/>
            <person name="Forrest A.R."/>
            <person name="Zavolan M."/>
            <person name="Davis M.J."/>
            <person name="Wilming L.G."/>
            <person name="Aidinis V."/>
            <person name="Allen J.E."/>
            <person name="Ambesi-Impiombato A."/>
            <person name="Apweiler R."/>
            <person name="Aturaliya R.N."/>
            <person name="Bailey T.L."/>
            <person name="Bansal M."/>
            <person name="Baxter L."/>
            <person name="Beisel K.W."/>
            <person name="Bersano T."/>
            <person name="Bono H."/>
            <person name="Chalk A.M."/>
            <person name="Chiu K.P."/>
            <person name="Choudhary V."/>
            <person name="Christoffels A."/>
            <person name="Clutterbuck D.R."/>
            <person name="Crowe M.L."/>
            <person name="Dalla E."/>
            <person name="Dalrymple B.P."/>
            <person name="de Bono B."/>
            <person name="Della Gatta G."/>
            <person name="di Bernardo D."/>
            <person name="Down T."/>
            <person name="Engstrom P."/>
            <person name="Fagiolini M."/>
            <person name="Faulkner G."/>
            <person name="Fletcher C.F."/>
            <person name="Fukushima T."/>
            <person name="Furuno M."/>
            <person name="Futaki S."/>
            <person name="Gariboldi M."/>
            <person name="Georgii-Hemming P."/>
            <person name="Gingeras T.R."/>
            <person name="Gojobori T."/>
            <person name="Green R.E."/>
            <person name="Gustincich S."/>
            <person name="Harbers M."/>
            <person name="Hayashi Y."/>
            <person name="Hensch T.K."/>
            <person name="Hirokawa N."/>
            <person name="Hill D."/>
            <person name="Huminiecki L."/>
            <person name="Iacono M."/>
            <person name="Ikeo K."/>
            <person name="Iwama A."/>
            <person name="Ishikawa T."/>
            <person name="Jakt M."/>
            <person name="Kanapin A."/>
            <person name="Katoh M."/>
            <person name="Kawasawa Y."/>
            <person name="Kelso J."/>
            <person name="Kitamura H."/>
            <person name="Kitano H."/>
            <person name="Kollias G."/>
            <person name="Krishnan S.P."/>
            <person name="Kruger A."/>
            <person name="Kummerfeld S.K."/>
            <person name="Kurochkin I.V."/>
            <person name="Lareau L.F."/>
            <person name="Lazarevic D."/>
            <person name="Lipovich L."/>
            <person name="Liu J."/>
            <person name="Liuni S."/>
            <person name="McWilliam S."/>
            <person name="Madan Babu M."/>
            <person name="Madera M."/>
            <person name="Marchionni L."/>
            <person name="Matsuda H."/>
            <person name="Matsuzawa S."/>
            <person name="Miki H."/>
            <person name="Mignone F."/>
            <person name="Miyake S."/>
            <person name="Morris K."/>
            <person name="Mottagui-Tabar S."/>
            <person name="Mulder N."/>
            <person name="Nakano N."/>
            <person name="Nakauchi H."/>
            <person name="Ng P."/>
            <person name="Nilsson R."/>
            <person name="Nishiguchi S."/>
            <person name="Nishikawa S."/>
            <person name="Nori F."/>
            <person name="Ohara O."/>
            <person name="Okazaki Y."/>
            <person name="Orlando V."/>
            <person name="Pang K.C."/>
            <person name="Pavan W.J."/>
            <person name="Pavesi G."/>
            <person name="Pesole G."/>
            <person name="Petrovsky N."/>
            <person name="Piazza S."/>
            <person name="Reed J."/>
            <person name="Reid J.F."/>
            <person name="Ring B.Z."/>
            <person name="Ringwald M."/>
            <person name="Rost B."/>
            <person name="Ruan Y."/>
            <person name="Salzberg S.L."/>
            <person name="Sandelin A."/>
            <person name="Schneider C."/>
            <person name="Schoenbach C."/>
            <person name="Sekiguchi K."/>
            <person name="Semple C.A."/>
            <person name="Seno S."/>
            <person name="Sessa L."/>
            <person name="Sheng Y."/>
            <person name="Shibata Y."/>
            <person name="Shimada H."/>
            <person name="Shimada K."/>
            <person name="Silva D."/>
            <person name="Sinclair B."/>
            <person name="Sperling S."/>
            <person name="Stupka E."/>
            <person name="Sugiura K."/>
            <person name="Sultana R."/>
            <person name="Takenaka Y."/>
            <person name="Taki K."/>
            <person name="Tammoja K."/>
            <person name="Tan S.L."/>
            <person name="Tang S."/>
            <person name="Taylor M.S."/>
            <person name="Tegner J."/>
            <person name="Teichmann S.A."/>
            <person name="Ueda H.R."/>
            <person name="van Nimwegen E."/>
            <person name="Verardo R."/>
            <person name="Wei C.L."/>
            <person name="Yagi K."/>
            <person name="Yamanishi H."/>
            <person name="Zabarovsky E."/>
            <person name="Zhu S."/>
            <person name="Zimmer A."/>
            <person name="Hide W."/>
            <person name="Bult C."/>
            <person name="Grimmond S.M."/>
            <person name="Teasdale R.D."/>
            <person name="Liu E.T."/>
            <person name="Brusic V."/>
            <person name="Quackenbush J."/>
            <person name="Wahlestedt C."/>
            <person name="Mattick J.S."/>
            <person name="Hume D.A."/>
            <person name="Kai C."/>
            <person name="Sasaki D."/>
            <person name="Tomaru Y."/>
            <person name="Fukuda S."/>
            <person name="Kanamori-Katayama M."/>
            <person name="Suzuki M."/>
            <person name="Aoki J."/>
            <person name="Arakawa T."/>
            <person name="Iida J."/>
            <person name="Imamura K."/>
            <person name="Itoh M."/>
            <person name="Kato T."/>
            <person name="Kawaji H."/>
            <person name="Kawagashira N."/>
            <person name="Kawashima T."/>
            <person name="Kojima M."/>
            <person name="Kondo S."/>
            <person name="Konno H."/>
            <person name="Nakano K."/>
            <person name="Ninomiya N."/>
            <person name="Nishio T."/>
            <person name="Okada M."/>
            <person name="Plessy C."/>
            <person name="Shibata K."/>
            <person name="Shiraki T."/>
            <person name="Suzuki S."/>
            <person name="Tagami M."/>
            <person name="Waki K."/>
            <person name="Watahiki A."/>
            <person name="Okamura-Oho Y."/>
            <person name="Suzuki H."/>
            <person name="Kawai J."/>
            <person name="Hayashizaki Y."/>
        </authorList>
    </citation>
    <scope>NUCLEOTIDE SEQUENCE [LARGE SCALE MRNA] (ISOFORMS 1 AND 2)</scope>
    <source>
        <strain>C57BL/6J</strain>
        <tissue>Embryo</tissue>
    </source>
</reference>
<reference key="2">
    <citation type="journal article" date="2004" name="Genome Res.">
        <title>The status, quality, and expansion of the NIH full-length cDNA project: the Mammalian Gene Collection (MGC).</title>
        <authorList>
            <consortium name="The MGC Project Team"/>
        </authorList>
    </citation>
    <scope>NUCLEOTIDE SEQUENCE [LARGE SCALE MRNA] (ISOFORM 1)</scope>
    <source>
        <tissue>Limb</tissue>
    </source>
</reference>
<reference key="3">
    <citation type="journal article" date="2012" name="J. Biol. Chem.">
        <title>DERP6 (ELP5) and C3ORF75 (ELP6) regulate tumorigenicity and migration of melanoma cells as subunits of Elongator.</title>
        <authorList>
            <person name="Close P."/>
            <person name="Gillard M."/>
            <person name="Ladang A."/>
            <person name="Jiang Z."/>
            <person name="Papuga J."/>
            <person name="Hawkes N."/>
            <person name="Nguyen L."/>
            <person name="Chapelle J.P."/>
            <person name="Bouillenne F."/>
            <person name="Svejstrup J."/>
            <person name="Fillet M."/>
            <person name="Chariot A."/>
        </authorList>
    </citation>
    <scope>FUNCTION</scope>
</reference>
<reference key="4">
    <citation type="journal article" date="2018" name="Nat. Commun.">
        <title>Elongator mutation in mice induces neurodegeneration and ataxia-like behavior.</title>
        <authorList>
            <person name="Kojic M."/>
            <person name="Gaik M."/>
            <person name="Kiska B."/>
            <person name="Salerno-Kochan A."/>
            <person name="Hunt S."/>
            <person name="Tedoldi A."/>
            <person name="Mureev S."/>
            <person name="Jones A."/>
            <person name="Whittle B."/>
            <person name="Genovesi L.A."/>
            <person name="Adolphe C."/>
            <person name="Brown D.L."/>
            <person name="Stow J.L."/>
            <person name="Alexandrov K."/>
            <person name="Sah P."/>
            <person name="Glatt S."/>
            <person name="Wainwright B.J."/>
        </authorList>
    </citation>
    <scope>TISSUE SPECIFICITY</scope>
    <scope>DISRUPTION PHENOTYPE</scope>
    <scope>MUTAGENESIS OF LEU-126</scope>
</reference>
<proteinExistence type="evidence at protein level"/>
<keyword id="KW-0025">Alternative splicing</keyword>
<keyword id="KW-0963">Cytoplasm</keyword>
<keyword id="KW-0539">Nucleus</keyword>
<keyword id="KW-1185">Reference proteome</keyword>
<keyword id="KW-0819">tRNA processing</keyword>
<evidence type="ECO:0000250" key="1">
    <source>
        <dbReference type="UniProtKB" id="Q0PNE2"/>
    </source>
</evidence>
<evidence type="ECO:0000269" key="2">
    <source>
    </source>
</evidence>
<evidence type="ECO:0000269" key="3">
    <source>
    </source>
</evidence>
<evidence type="ECO:0000303" key="4">
    <source>
    </source>
</evidence>
<evidence type="ECO:0000305" key="5"/>
<dbReference type="EMBL" id="AK011270">
    <property type="protein sequence ID" value="BAB27508.1"/>
    <property type="molecule type" value="mRNA"/>
</dbReference>
<dbReference type="EMBL" id="AK075986">
    <property type="protein sequence ID" value="BAC36098.1"/>
    <property type="molecule type" value="mRNA"/>
</dbReference>
<dbReference type="EMBL" id="BC048732">
    <property type="protein sequence ID" value="AAH48732.1"/>
    <property type="molecule type" value="mRNA"/>
</dbReference>
<dbReference type="CCDS" id="CCDS52937.1">
    <molecule id="Q8BK75-1"/>
</dbReference>
<dbReference type="RefSeq" id="NP_001074850.1">
    <molecule id="Q8BK75-1"/>
    <property type="nucleotide sequence ID" value="NM_001081381.1"/>
</dbReference>
<dbReference type="EMDB" id="EMD-15626"/>
<dbReference type="SMR" id="Q8BK75"/>
<dbReference type="BioGRID" id="215321">
    <property type="interactions" value="7"/>
</dbReference>
<dbReference type="FunCoup" id="Q8BK75">
    <property type="interactions" value="2101"/>
</dbReference>
<dbReference type="STRING" id="10090.ENSMUSP00000142823"/>
<dbReference type="PhosphoSitePlus" id="Q8BK75"/>
<dbReference type="PaxDb" id="10090-ENSMUSP00000069017"/>
<dbReference type="PeptideAtlas" id="Q8BK75"/>
<dbReference type="ProteomicsDB" id="277788">
    <molecule id="Q8BK75-1"/>
</dbReference>
<dbReference type="ProteomicsDB" id="277789">
    <molecule id="Q8BK75-2"/>
</dbReference>
<dbReference type="Pumba" id="Q8BK75"/>
<dbReference type="Antibodypedia" id="48948">
    <property type="antibodies" value="85 antibodies from 13 providers"/>
</dbReference>
<dbReference type="Ensembl" id="ENSMUST00000199592.5">
    <molecule id="Q8BK75-1"/>
    <property type="protein sequence ID" value="ENSMUSP00000142823.2"/>
    <property type="gene ID" value="ENSMUSG00000054836.13"/>
</dbReference>
<dbReference type="GeneID" id="72341"/>
<dbReference type="KEGG" id="mmu:72341"/>
<dbReference type="UCSC" id="uc009rtv.1">
    <molecule id="Q8BK75-1"/>
    <property type="organism name" value="mouse"/>
</dbReference>
<dbReference type="AGR" id="MGI:1919349"/>
<dbReference type="CTD" id="54859"/>
<dbReference type="MGI" id="MGI:1919349">
    <property type="gene designation" value="Elp6"/>
</dbReference>
<dbReference type="VEuPathDB" id="HostDB:ENSMUSG00000054836"/>
<dbReference type="eggNOG" id="KOG4723">
    <property type="taxonomic scope" value="Eukaryota"/>
</dbReference>
<dbReference type="GeneTree" id="ENSGT00390000011734"/>
<dbReference type="InParanoid" id="Q8BK75"/>
<dbReference type="OMA" id="MFTELNS"/>
<dbReference type="OrthoDB" id="9995306at2759"/>
<dbReference type="PhylomeDB" id="Q8BK75"/>
<dbReference type="TreeFam" id="TF331346"/>
<dbReference type="UniPathway" id="UPA00988"/>
<dbReference type="BioGRID-ORCS" id="72341">
    <property type="hits" value="21 hits in 78 CRISPR screens"/>
</dbReference>
<dbReference type="PRO" id="PR:Q8BK75"/>
<dbReference type="Proteomes" id="UP000000589">
    <property type="component" value="Chromosome 9"/>
</dbReference>
<dbReference type="RNAct" id="Q8BK75">
    <property type="molecule type" value="protein"/>
</dbReference>
<dbReference type="Bgee" id="ENSMUSG00000054836">
    <property type="expression patterns" value="Expressed in dentate gyrus of hippocampal formation granule cell and 224 other cell types or tissues"/>
</dbReference>
<dbReference type="ExpressionAtlas" id="Q8BK75">
    <property type="expression patterns" value="baseline and differential"/>
</dbReference>
<dbReference type="GO" id="GO:0005829">
    <property type="term" value="C:cytosol"/>
    <property type="evidence" value="ECO:0007669"/>
    <property type="project" value="Ensembl"/>
</dbReference>
<dbReference type="GO" id="GO:0033588">
    <property type="term" value="C:elongator holoenzyme complex"/>
    <property type="evidence" value="ECO:0000250"/>
    <property type="project" value="UniProtKB"/>
</dbReference>
<dbReference type="GO" id="GO:0005634">
    <property type="term" value="C:nucleus"/>
    <property type="evidence" value="ECO:0007669"/>
    <property type="project" value="UniProtKB-SubCell"/>
</dbReference>
<dbReference type="GO" id="GO:0006915">
    <property type="term" value="P:apoptotic process"/>
    <property type="evidence" value="ECO:0000315"/>
    <property type="project" value="MGI"/>
</dbReference>
<dbReference type="GO" id="GO:0097352">
    <property type="term" value="P:autophagosome maturation"/>
    <property type="evidence" value="ECO:0000315"/>
    <property type="project" value="MGI"/>
</dbReference>
<dbReference type="GO" id="GO:0006914">
    <property type="term" value="P:autophagy"/>
    <property type="evidence" value="ECO:0000315"/>
    <property type="project" value="MGI"/>
</dbReference>
<dbReference type="GO" id="GO:0033554">
    <property type="term" value="P:cellular response to stress"/>
    <property type="evidence" value="ECO:0000315"/>
    <property type="project" value="MGI"/>
</dbReference>
<dbReference type="GO" id="GO:0048877">
    <property type="term" value="P:homeostasis of number of retina cells"/>
    <property type="evidence" value="ECO:0000315"/>
    <property type="project" value="MGI"/>
</dbReference>
<dbReference type="GO" id="GO:0141084">
    <property type="term" value="P:inflammasome-mediated signaling pathway"/>
    <property type="evidence" value="ECO:0000315"/>
    <property type="project" value="MGI"/>
</dbReference>
<dbReference type="GO" id="GO:0007626">
    <property type="term" value="P:locomotory behavior"/>
    <property type="evidence" value="ECO:0000315"/>
    <property type="project" value="MGI"/>
</dbReference>
<dbReference type="GO" id="GO:0061744">
    <property type="term" value="P:motor behavior"/>
    <property type="evidence" value="ECO:0000315"/>
    <property type="project" value="MGI"/>
</dbReference>
<dbReference type="GO" id="GO:0050905">
    <property type="term" value="P:neuromuscular process"/>
    <property type="evidence" value="ECO:0000315"/>
    <property type="project" value="MGI"/>
</dbReference>
<dbReference type="GO" id="GO:0050885">
    <property type="term" value="P:neuromuscular process controlling balance"/>
    <property type="evidence" value="ECO:0000315"/>
    <property type="project" value="MGI"/>
</dbReference>
<dbReference type="GO" id="GO:0051402">
    <property type="term" value="P:neuron apoptotic process"/>
    <property type="evidence" value="ECO:0000315"/>
    <property type="project" value="MGI"/>
</dbReference>
<dbReference type="GO" id="GO:0046530">
    <property type="term" value="P:photoreceptor cell differentiation"/>
    <property type="evidence" value="ECO:0000315"/>
    <property type="project" value="MGI"/>
</dbReference>
<dbReference type="GO" id="GO:0030335">
    <property type="term" value="P:positive regulation of cell migration"/>
    <property type="evidence" value="ECO:0000315"/>
    <property type="project" value="UniProtKB"/>
</dbReference>
<dbReference type="GO" id="GO:0006457">
    <property type="term" value="P:protein folding"/>
    <property type="evidence" value="ECO:0000315"/>
    <property type="project" value="MGI"/>
</dbReference>
<dbReference type="GO" id="GO:0006986">
    <property type="term" value="P:response to unfolded protein"/>
    <property type="evidence" value="ECO:0000315"/>
    <property type="project" value="MGI"/>
</dbReference>
<dbReference type="GO" id="GO:0060041">
    <property type="term" value="P:retina development in camera-type eye"/>
    <property type="evidence" value="ECO:0000315"/>
    <property type="project" value="MGI"/>
</dbReference>
<dbReference type="GO" id="GO:0006412">
    <property type="term" value="P:translation"/>
    <property type="evidence" value="ECO:0000315"/>
    <property type="project" value="MGI"/>
</dbReference>
<dbReference type="GO" id="GO:0002098">
    <property type="term" value="P:tRNA wobble uridine modification"/>
    <property type="evidence" value="ECO:0007669"/>
    <property type="project" value="InterPro"/>
</dbReference>
<dbReference type="GO" id="GO:0010992">
    <property type="term" value="P:ubiquitin recycling"/>
    <property type="evidence" value="ECO:0000315"/>
    <property type="project" value="MGI"/>
</dbReference>
<dbReference type="CDD" id="cd19495">
    <property type="entry name" value="Elp6"/>
    <property type="match status" value="1"/>
</dbReference>
<dbReference type="FunFam" id="3.40.50.300:FF:001078">
    <property type="entry name" value="Elongator acetyltransferase complex subunit 6"/>
    <property type="match status" value="1"/>
</dbReference>
<dbReference type="Gene3D" id="3.40.50.300">
    <property type="entry name" value="P-loop containing nucleotide triphosphate hydrolases"/>
    <property type="match status" value="1"/>
</dbReference>
<dbReference type="InterPro" id="IPR018627">
    <property type="entry name" value="ELP6"/>
</dbReference>
<dbReference type="InterPro" id="IPR027417">
    <property type="entry name" value="P-loop_NTPase"/>
</dbReference>
<dbReference type="PANTHER" id="PTHR16184">
    <property type="entry name" value="ELONGATOR COMPLEX PROTEIN 6"/>
    <property type="match status" value="1"/>
</dbReference>
<dbReference type="PANTHER" id="PTHR16184:SF6">
    <property type="entry name" value="ELONGATOR COMPLEX PROTEIN 6"/>
    <property type="match status" value="1"/>
</dbReference>
<dbReference type="Pfam" id="PF09807">
    <property type="entry name" value="ELP6"/>
    <property type="match status" value="1"/>
</dbReference>